<accession>Q3J061</accession>
<evidence type="ECO:0000255" key="1">
    <source>
        <dbReference type="HAMAP-Rule" id="MF_00228"/>
    </source>
</evidence>
<dbReference type="EC" id="2.7.1.50" evidence="1"/>
<dbReference type="EMBL" id="CP000143">
    <property type="protein sequence ID" value="ABA79823.1"/>
    <property type="molecule type" value="Genomic_DNA"/>
</dbReference>
<dbReference type="RefSeq" id="WP_011338388.1">
    <property type="nucleotide sequence ID" value="NC_007493.2"/>
</dbReference>
<dbReference type="RefSeq" id="YP_353724.1">
    <property type="nucleotide sequence ID" value="NC_007493.2"/>
</dbReference>
<dbReference type="SMR" id="Q3J061"/>
<dbReference type="STRING" id="272943.RSP_0649"/>
<dbReference type="EnsemblBacteria" id="ABA79823">
    <property type="protein sequence ID" value="ABA79823"/>
    <property type="gene ID" value="RSP_0649"/>
</dbReference>
<dbReference type="GeneID" id="3718298"/>
<dbReference type="KEGG" id="rsp:RSP_0649"/>
<dbReference type="PATRIC" id="fig|272943.9.peg.2599"/>
<dbReference type="eggNOG" id="COG2145">
    <property type="taxonomic scope" value="Bacteria"/>
</dbReference>
<dbReference type="OrthoDB" id="8909021at2"/>
<dbReference type="PhylomeDB" id="Q3J061"/>
<dbReference type="UniPathway" id="UPA00060">
    <property type="reaction ID" value="UER00139"/>
</dbReference>
<dbReference type="Proteomes" id="UP000002703">
    <property type="component" value="Chromosome 1"/>
</dbReference>
<dbReference type="GO" id="GO:0005524">
    <property type="term" value="F:ATP binding"/>
    <property type="evidence" value="ECO:0007669"/>
    <property type="project" value="UniProtKB-UniRule"/>
</dbReference>
<dbReference type="GO" id="GO:0004417">
    <property type="term" value="F:hydroxyethylthiazole kinase activity"/>
    <property type="evidence" value="ECO:0007669"/>
    <property type="project" value="UniProtKB-UniRule"/>
</dbReference>
<dbReference type="GO" id="GO:0000287">
    <property type="term" value="F:magnesium ion binding"/>
    <property type="evidence" value="ECO:0007669"/>
    <property type="project" value="UniProtKB-UniRule"/>
</dbReference>
<dbReference type="GO" id="GO:0009228">
    <property type="term" value="P:thiamine biosynthetic process"/>
    <property type="evidence" value="ECO:0007669"/>
    <property type="project" value="UniProtKB-KW"/>
</dbReference>
<dbReference type="GO" id="GO:0009229">
    <property type="term" value="P:thiamine diphosphate biosynthetic process"/>
    <property type="evidence" value="ECO:0007669"/>
    <property type="project" value="UniProtKB-UniRule"/>
</dbReference>
<dbReference type="CDD" id="cd01170">
    <property type="entry name" value="THZ_kinase"/>
    <property type="match status" value="1"/>
</dbReference>
<dbReference type="Gene3D" id="3.40.1190.20">
    <property type="match status" value="1"/>
</dbReference>
<dbReference type="HAMAP" id="MF_00228">
    <property type="entry name" value="Thz_kinase"/>
    <property type="match status" value="1"/>
</dbReference>
<dbReference type="InterPro" id="IPR000417">
    <property type="entry name" value="Hyethyz_kinase"/>
</dbReference>
<dbReference type="InterPro" id="IPR029056">
    <property type="entry name" value="Ribokinase-like"/>
</dbReference>
<dbReference type="NCBIfam" id="NF006830">
    <property type="entry name" value="PRK09355.1"/>
    <property type="match status" value="1"/>
</dbReference>
<dbReference type="NCBIfam" id="TIGR00694">
    <property type="entry name" value="thiM"/>
    <property type="match status" value="1"/>
</dbReference>
<dbReference type="Pfam" id="PF02110">
    <property type="entry name" value="HK"/>
    <property type="match status" value="1"/>
</dbReference>
<dbReference type="PIRSF" id="PIRSF000513">
    <property type="entry name" value="Thz_kinase"/>
    <property type="match status" value="1"/>
</dbReference>
<dbReference type="PRINTS" id="PR01099">
    <property type="entry name" value="HYETHTZKNASE"/>
</dbReference>
<dbReference type="SUPFAM" id="SSF53613">
    <property type="entry name" value="Ribokinase-like"/>
    <property type="match status" value="1"/>
</dbReference>
<feature type="chain" id="PRO_0000336564" description="Hydroxyethylthiazole kinase">
    <location>
        <begin position="1"/>
        <end position="262"/>
    </location>
</feature>
<feature type="binding site" evidence="1">
    <location>
        <position position="43"/>
    </location>
    <ligand>
        <name>substrate</name>
    </ligand>
</feature>
<feature type="binding site" evidence="1">
    <location>
        <position position="118"/>
    </location>
    <ligand>
        <name>ATP</name>
        <dbReference type="ChEBI" id="CHEBI:30616"/>
    </ligand>
</feature>
<feature type="binding site" evidence="1">
    <location>
        <position position="164"/>
    </location>
    <ligand>
        <name>ATP</name>
        <dbReference type="ChEBI" id="CHEBI:30616"/>
    </ligand>
</feature>
<feature type="binding site" evidence="1">
    <location>
        <position position="191"/>
    </location>
    <ligand>
        <name>substrate</name>
    </ligand>
</feature>
<organism>
    <name type="scientific">Cereibacter sphaeroides (strain ATCC 17023 / DSM 158 / JCM 6121 / CCUG 31486 / LMG 2827 / NBRC 12203 / NCIMB 8253 / ATH 2.4.1.)</name>
    <name type="common">Rhodobacter sphaeroides</name>
    <dbReference type="NCBI Taxonomy" id="272943"/>
    <lineage>
        <taxon>Bacteria</taxon>
        <taxon>Pseudomonadati</taxon>
        <taxon>Pseudomonadota</taxon>
        <taxon>Alphaproteobacteria</taxon>
        <taxon>Rhodobacterales</taxon>
        <taxon>Paracoccaceae</taxon>
        <taxon>Cereibacter</taxon>
    </lineage>
</organism>
<gene>
    <name evidence="1" type="primary">thiM</name>
    <name type="ordered locus">RHOS4_22550</name>
    <name type="ORF">RSP_0649</name>
</gene>
<keyword id="KW-0067">ATP-binding</keyword>
<keyword id="KW-0418">Kinase</keyword>
<keyword id="KW-0460">Magnesium</keyword>
<keyword id="KW-0479">Metal-binding</keyword>
<keyword id="KW-0547">Nucleotide-binding</keyword>
<keyword id="KW-1185">Reference proteome</keyword>
<keyword id="KW-0784">Thiamine biosynthesis</keyword>
<keyword id="KW-0808">Transferase</keyword>
<proteinExistence type="inferred from homology"/>
<name>THIM_CERS4</name>
<protein>
    <recommendedName>
        <fullName evidence="1">Hydroxyethylthiazole kinase</fullName>
        <ecNumber evidence="1">2.7.1.50</ecNumber>
    </recommendedName>
    <alternativeName>
        <fullName evidence="1">4-methyl-5-beta-hydroxyethylthiazole kinase</fullName>
        <shortName evidence="1">TH kinase</shortName>
        <shortName evidence="1">Thz kinase</shortName>
    </alternativeName>
</protein>
<sequence>MDGCGTYLDTMRREAPLVQCITNFVAMNVVANVLLAAGASPAMVHDAEESGEFAAIAQALTINMGTPSPRWVEGMEAAARGAAAAGRPWVLDPVAVGATAFRRGLGARLLALKPTVIRGNASEILALAGAETRGKGADSADPVAAAEAAAQRLAESSGAVVAVTGPVDFVTDGRRGIRCANGHPLMPRVTALGCSLTGIVGAFAATRPPFEATAAALAFFGLAGEEAAKTATGPGSFQVAFLDALHTLSPEALDRGARLEAA</sequence>
<reference key="1">
    <citation type="submission" date="2005-09" db="EMBL/GenBank/DDBJ databases">
        <title>Complete sequence of chromosome 1 of Rhodobacter sphaeroides 2.4.1.</title>
        <authorList>
            <person name="Copeland A."/>
            <person name="Lucas S."/>
            <person name="Lapidus A."/>
            <person name="Barry K."/>
            <person name="Detter J.C."/>
            <person name="Glavina T."/>
            <person name="Hammon N."/>
            <person name="Israni S."/>
            <person name="Pitluck S."/>
            <person name="Richardson P."/>
            <person name="Mackenzie C."/>
            <person name="Choudhary M."/>
            <person name="Larimer F."/>
            <person name="Hauser L.J."/>
            <person name="Land M."/>
            <person name="Donohue T.J."/>
            <person name="Kaplan S."/>
        </authorList>
    </citation>
    <scope>NUCLEOTIDE SEQUENCE [LARGE SCALE GENOMIC DNA]</scope>
    <source>
        <strain>ATCC 17023 / DSM 158 / JCM 6121 / CCUG 31486 / LMG 2827 / NBRC 12203 / NCIMB 8253 / ATH 2.4.1.</strain>
    </source>
</reference>
<comment type="function">
    <text evidence="1">Catalyzes the phosphorylation of the hydroxyl group of 4-methyl-5-beta-hydroxyethylthiazole (THZ).</text>
</comment>
<comment type="catalytic activity">
    <reaction evidence="1">
        <text>5-(2-hydroxyethyl)-4-methylthiazole + ATP = 4-methyl-5-(2-phosphooxyethyl)-thiazole + ADP + H(+)</text>
        <dbReference type="Rhea" id="RHEA:24212"/>
        <dbReference type="ChEBI" id="CHEBI:15378"/>
        <dbReference type="ChEBI" id="CHEBI:17957"/>
        <dbReference type="ChEBI" id="CHEBI:30616"/>
        <dbReference type="ChEBI" id="CHEBI:58296"/>
        <dbReference type="ChEBI" id="CHEBI:456216"/>
        <dbReference type="EC" id="2.7.1.50"/>
    </reaction>
</comment>
<comment type="cofactor">
    <cofactor evidence="1">
        <name>Mg(2+)</name>
        <dbReference type="ChEBI" id="CHEBI:18420"/>
    </cofactor>
</comment>
<comment type="pathway">
    <text evidence="1">Cofactor biosynthesis; thiamine diphosphate biosynthesis; 4-methyl-5-(2-phosphoethyl)-thiazole from 5-(2-hydroxyethyl)-4-methylthiazole: step 1/1.</text>
</comment>
<comment type="similarity">
    <text evidence="1">Belongs to the Thz kinase family.</text>
</comment>